<dbReference type="EMBL" id="CM000137">
    <property type="protein sequence ID" value="EAY81931.1"/>
    <property type="molecule type" value="Genomic_DNA"/>
</dbReference>
<dbReference type="SMR" id="A2ZH47"/>
<dbReference type="STRING" id="39946.A2ZH47"/>
<dbReference type="EnsemblPlants" id="BGIOSGA036831-TA">
    <property type="protein sequence ID" value="BGIOSGA036831-PA"/>
    <property type="gene ID" value="BGIOSGA036831"/>
</dbReference>
<dbReference type="Gramene" id="BGIOSGA036831-TA">
    <property type="protein sequence ID" value="BGIOSGA036831-PA"/>
    <property type="gene ID" value="BGIOSGA036831"/>
</dbReference>
<dbReference type="HOGENOM" id="CLU_070454_1_0_1"/>
<dbReference type="OMA" id="HQQPEEW"/>
<dbReference type="Proteomes" id="UP000007015">
    <property type="component" value="Chromosome 12"/>
</dbReference>
<dbReference type="GO" id="GO:0005634">
    <property type="term" value="C:nucleus"/>
    <property type="evidence" value="ECO:0007669"/>
    <property type="project" value="UniProtKB-SubCell"/>
</dbReference>
<dbReference type="GO" id="GO:0003677">
    <property type="term" value="F:DNA binding"/>
    <property type="evidence" value="ECO:0007669"/>
    <property type="project" value="UniProtKB-KW"/>
</dbReference>
<dbReference type="GO" id="GO:0003700">
    <property type="term" value="F:DNA-binding transcription factor activity"/>
    <property type="evidence" value="ECO:0007669"/>
    <property type="project" value="InterPro"/>
</dbReference>
<dbReference type="GO" id="GO:0099402">
    <property type="term" value="P:plant organ development"/>
    <property type="evidence" value="ECO:0007669"/>
    <property type="project" value="InterPro"/>
</dbReference>
<dbReference type="CDD" id="cd00086">
    <property type="entry name" value="homeodomain"/>
    <property type="match status" value="1"/>
</dbReference>
<dbReference type="FunFam" id="1.10.10.60:FF:000146">
    <property type="entry name" value="WUSCHEL-related homeobox 4"/>
    <property type="match status" value="1"/>
</dbReference>
<dbReference type="Gene3D" id="1.10.10.60">
    <property type="entry name" value="Homeodomain-like"/>
    <property type="match status" value="1"/>
</dbReference>
<dbReference type="InterPro" id="IPR001356">
    <property type="entry name" value="HD"/>
</dbReference>
<dbReference type="InterPro" id="IPR009057">
    <property type="entry name" value="Homeodomain-like_sf"/>
</dbReference>
<dbReference type="InterPro" id="IPR044555">
    <property type="entry name" value="WUSCHEL-like"/>
</dbReference>
<dbReference type="PANTHER" id="PTHR45940">
    <property type="entry name" value="WUSCHEL-RELATED HOMEOBOX 1-RELATED"/>
    <property type="match status" value="1"/>
</dbReference>
<dbReference type="PANTHER" id="PTHR45940:SF42">
    <property type="entry name" value="WUSCHEL-RELATED HOMEOBOX 3"/>
    <property type="match status" value="1"/>
</dbReference>
<dbReference type="Pfam" id="PF00046">
    <property type="entry name" value="Homeodomain"/>
    <property type="match status" value="1"/>
</dbReference>
<dbReference type="SMART" id="SM00389">
    <property type="entry name" value="HOX"/>
    <property type="match status" value="1"/>
</dbReference>
<dbReference type="SUPFAM" id="SSF46689">
    <property type="entry name" value="Homeodomain-like"/>
    <property type="match status" value="1"/>
</dbReference>
<dbReference type="PROSITE" id="PS50071">
    <property type="entry name" value="HOMEOBOX_2"/>
    <property type="match status" value="1"/>
</dbReference>
<evidence type="ECO:0000250" key="1"/>
<evidence type="ECO:0000255" key="2">
    <source>
        <dbReference type="PROSITE-ProRule" id="PRU00108"/>
    </source>
</evidence>
<evidence type="ECO:0000256" key="3">
    <source>
        <dbReference type="SAM" id="MobiDB-lite"/>
    </source>
</evidence>
<evidence type="ECO:0000305" key="4"/>
<protein>
    <recommendedName>
        <fullName>WUSCHEL-related homeobox 3</fullName>
    </recommendedName>
    <alternativeName>
        <fullName>OsNS</fullName>
    </alternativeName>
    <alternativeName>
        <fullName>OsWOX3</fullName>
    </alternativeName>
</protein>
<accession>A2ZH47</accession>
<sequence>MPQTPSTRWCPTPEQLMILEEMYRSGVRTPNAAEIQQITAHLAYYGRIEGKNVFYWFQNHKARERQRLRRRLCARHQQQPSPPSSTVPPAPTAAAAGAVVQVHPAVMQLHHHHHHHHPYAAAAAAQSHHLQQQQQQQAEWPAAVDYCSTASASASATAADMAIPPCCRPLKTLELFPTKSTSGGLKEDCCSSSKSSSCSTSTN</sequence>
<comment type="function">
    <text evidence="1">Transcription factor which may be involved in developmental processes.</text>
</comment>
<comment type="subcellular location">
    <subcellularLocation>
        <location evidence="2">Nucleus</location>
    </subcellularLocation>
</comment>
<comment type="similarity">
    <text evidence="4">Belongs to the WUS homeobox family.</text>
</comment>
<gene>
    <name type="primary">WOX3</name>
    <name type="ORF">OsI_035890</name>
</gene>
<keyword id="KW-0217">Developmental protein</keyword>
<keyword id="KW-0238">DNA-binding</keyword>
<keyword id="KW-0371">Homeobox</keyword>
<keyword id="KW-0539">Nucleus</keyword>
<keyword id="KW-1185">Reference proteome</keyword>
<keyword id="KW-0804">Transcription</keyword>
<keyword id="KW-0805">Transcription regulation</keyword>
<reference key="1">
    <citation type="journal article" date="2005" name="PLoS Biol.">
        <title>The genomes of Oryza sativa: a history of duplications.</title>
        <authorList>
            <person name="Yu J."/>
            <person name="Wang J."/>
            <person name="Lin W."/>
            <person name="Li S."/>
            <person name="Li H."/>
            <person name="Zhou J."/>
            <person name="Ni P."/>
            <person name="Dong W."/>
            <person name="Hu S."/>
            <person name="Zeng C."/>
            <person name="Zhang J."/>
            <person name="Zhang Y."/>
            <person name="Li R."/>
            <person name="Xu Z."/>
            <person name="Li S."/>
            <person name="Li X."/>
            <person name="Zheng H."/>
            <person name="Cong L."/>
            <person name="Lin L."/>
            <person name="Yin J."/>
            <person name="Geng J."/>
            <person name="Li G."/>
            <person name="Shi J."/>
            <person name="Liu J."/>
            <person name="Lv H."/>
            <person name="Li J."/>
            <person name="Wang J."/>
            <person name="Deng Y."/>
            <person name="Ran L."/>
            <person name="Shi X."/>
            <person name="Wang X."/>
            <person name="Wu Q."/>
            <person name="Li C."/>
            <person name="Ren X."/>
            <person name="Wang J."/>
            <person name="Wang X."/>
            <person name="Li D."/>
            <person name="Liu D."/>
            <person name="Zhang X."/>
            <person name="Ji Z."/>
            <person name="Zhao W."/>
            <person name="Sun Y."/>
            <person name="Zhang Z."/>
            <person name="Bao J."/>
            <person name="Han Y."/>
            <person name="Dong L."/>
            <person name="Ji J."/>
            <person name="Chen P."/>
            <person name="Wu S."/>
            <person name="Liu J."/>
            <person name="Xiao Y."/>
            <person name="Bu D."/>
            <person name="Tan J."/>
            <person name="Yang L."/>
            <person name="Ye C."/>
            <person name="Zhang J."/>
            <person name="Xu J."/>
            <person name="Zhou Y."/>
            <person name="Yu Y."/>
            <person name="Zhang B."/>
            <person name="Zhuang S."/>
            <person name="Wei H."/>
            <person name="Liu B."/>
            <person name="Lei M."/>
            <person name="Yu H."/>
            <person name="Li Y."/>
            <person name="Xu H."/>
            <person name="Wei S."/>
            <person name="He X."/>
            <person name="Fang L."/>
            <person name="Zhang Z."/>
            <person name="Zhang Y."/>
            <person name="Huang X."/>
            <person name="Su Z."/>
            <person name="Tong W."/>
            <person name="Li J."/>
            <person name="Tong Z."/>
            <person name="Li S."/>
            <person name="Ye J."/>
            <person name="Wang L."/>
            <person name="Fang L."/>
            <person name="Lei T."/>
            <person name="Chen C.-S."/>
            <person name="Chen H.-C."/>
            <person name="Xu Z."/>
            <person name="Li H."/>
            <person name="Huang H."/>
            <person name="Zhang F."/>
            <person name="Xu H."/>
            <person name="Li N."/>
            <person name="Zhao C."/>
            <person name="Li S."/>
            <person name="Dong L."/>
            <person name="Huang Y."/>
            <person name="Li L."/>
            <person name="Xi Y."/>
            <person name="Qi Q."/>
            <person name="Li W."/>
            <person name="Zhang B."/>
            <person name="Hu W."/>
            <person name="Zhang Y."/>
            <person name="Tian X."/>
            <person name="Jiao Y."/>
            <person name="Liang X."/>
            <person name="Jin J."/>
            <person name="Gao L."/>
            <person name="Zheng W."/>
            <person name="Hao B."/>
            <person name="Liu S.-M."/>
            <person name="Wang W."/>
            <person name="Yuan L."/>
            <person name="Cao M."/>
            <person name="McDermott J."/>
            <person name="Samudrala R."/>
            <person name="Wang J."/>
            <person name="Wong G.K.-S."/>
            <person name="Yang H."/>
        </authorList>
    </citation>
    <scope>NUCLEOTIDE SEQUENCE [LARGE SCALE GENOMIC DNA]</scope>
    <source>
        <strain>cv. 93-11</strain>
    </source>
</reference>
<reference key="2">
    <citation type="journal article" date="2007" name="Plant Physiol.">
        <title>A WUSCHEL-LIKE HOMEOBOX gene represses a YABBY gene expression required for rice leaf development.</title>
        <authorList>
            <person name="Dai M."/>
            <person name="Hu Y."/>
            <person name="Zhao Y."/>
            <person name="Liu H."/>
            <person name="Zhou D.-X."/>
        </authorList>
    </citation>
    <scope>NOMENCLATURE</scope>
</reference>
<feature type="chain" id="PRO_0000308636" description="WUSCHEL-related homeobox 3">
    <location>
        <begin position="1"/>
        <end position="203"/>
    </location>
</feature>
<feature type="DNA-binding region" description="Homeobox; WUS-type" evidence="2">
    <location>
        <begin position="4"/>
        <end position="68"/>
    </location>
</feature>
<feature type="region of interest" description="Disordered" evidence="3">
    <location>
        <begin position="73"/>
        <end position="95"/>
    </location>
</feature>
<feature type="region of interest" description="Disordered" evidence="3">
    <location>
        <begin position="109"/>
        <end position="135"/>
    </location>
</feature>
<feature type="region of interest" description="Disordered" evidence="3">
    <location>
        <begin position="180"/>
        <end position="203"/>
    </location>
</feature>
<feature type="compositionally biased region" description="Pro residues" evidence="3">
    <location>
        <begin position="80"/>
        <end position="91"/>
    </location>
</feature>
<feature type="compositionally biased region" description="Basic residues" evidence="3">
    <location>
        <begin position="109"/>
        <end position="118"/>
    </location>
</feature>
<feature type="compositionally biased region" description="Low complexity" evidence="3">
    <location>
        <begin position="119"/>
        <end position="135"/>
    </location>
</feature>
<feature type="compositionally biased region" description="Low complexity" evidence="3">
    <location>
        <begin position="190"/>
        <end position="203"/>
    </location>
</feature>
<proteinExistence type="inferred from homology"/>
<name>WOX3_ORYSI</name>
<organism>
    <name type="scientific">Oryza sativa subsp. indica</name>
    <name type="common">Rice</name>
    <dbReference type="NCBI Taxonomy" id="39946"/>
    <lineage>
        <taxon>Eukaryota</taxon>
        <taxon>Viridiplantae</taxon>
        <taxon>Streptophyta</taxon>
        <taxon>Embryophyta</taxon>
        <taxon>Tracheophyta</taxon>
        <taxon>Spermatophyta</taxon>
        <taxon>Magnoliopsida</taxon>
        <taxon>Liliopsida</taxon>
        <taxon>Poales</taxon>
        <taxon>Poaceae</taxon>
        <taxon>BOP clade</taxon>
        <taxon>Oryzoideae</taxon>
        <taxon>Oryzeae</taxon>
        <taxon>Oryzinae</taxon>
        <taxon>Oryza</taxon>
        <taxon>Oryza sativa</taxon>
    </lineage>
</organism>